<dbReference type="EMBL" id="AB064528">
    <property type="protein sequence ID" value="BAB86369.1"/>
    <property type="molecule type" value="mRNA"/>
</dbReference>
<dbReference type="EMBL" id="AC002343">
    <property type="protein sequence ID" value="AAB63606.1"/>
    <property type="status" value="ALT_SEQ"/>
    <property type="molecule type" value="Genomic_DNA"/>
</dbReference>
<dbReference type="EMBL" id="AL078637">
    <property type="protein sequence ID" value="CAB45054.1"/>
    <property type="molecule type" value="Genomic_DNA"/>
</dbReference>
<dbReference type="EMBL" id="AL161561">
    <property type="protein sequence ID" value="CAB79329.1"/>
    <property type="molecule type" value="Genomic_DNA"/>
</dbReference>
<dbReference type="EMBL" id="CP002687">
    <property type="protein sequence ID" value="AEE84861.1"/>
    <property type="molecule type" value="Genomic_DNA"/>
</dbReference>
<dbReference type="EMBL" id="AY039895">
    <property type="protein sequence ID" value="AAK63999.1"/>
    <property type="molecule type" value="mRNA"/>
</dbReference>
<dbReference type="EMBL" id="AY072394">
    <property type="protein sequence ID" value="AAL62386.1"/>
    <property type="molecule type" value="mRNA"/>
</dbReference>
<dbReference type="EMBL" id="BT004527">
    <property type="protein sequence ID" value="AAO42773.1"/>
    <property type="molecule type" value="mRNA"/>
</dbReference>
<dbReference type="EMBL" id="AK221485">
    <property type="protein sequence ID" value="BAD94659.1"/>
    <property type="molecule type" value="mRNA"/>
</dbReference>
<dbReference type="PIR" id="T09882">
    <property type="entry name" value="T09882"/>
</dbReference>
<dbReference type="RefSeq" id="NP_194150.1">
    <molecule id="Q9STX5-1"/>
    <property type="nucleotide sequence ID" value="NM_118552.4"/>
</dbReference>
<dbReference type="SMR" id="Q9STX5"/>
<dbReference type="BioGRID" id="13809">
    <property type="interactions" value="59"/>
</dbReference>
<dbReference type="FunCoup" id="Q9STX5">
    <property type="interactions" value="2777"/>
</dbReference>
<dbReference type="IntAct" id="Q9STX5">
    <property type="interactions" value="9"/>
</dbReference>
<dbReference type="STRING" id="3702.Q9STX5"/>
<dbReference type="GlyCosmos" id="Q9STX5">
    <property type="glycosylation" value="3 sites, No reported glycans"/>
</dbReference>
<dbReference type="GlyGen" id="Q9STX5">
    <property type="glycosylation" value="3 sites"/>
</dbReference>
<dbReference type="iPTMnet" id="Q9STX5"/>
<dbReference type="MetOSite" id="Q9STX5"/>
<dbReference type="PaxDb" id="3702-AT4G24190.1"/>
<dbReference type="ProteomicsDB" id="221897">
    <molecule id="Q9STX5-1"/>
</dbReference>
<dbReference type="EnsemblPlants" id="AT4G24190.1">
    <molecule id="Q9STX5-1"/>
    <property type="protein sequence ID" value="AT4G24190.1"/>
    <property type="gene ID" value="AT4G24190"/>
</dbReference>
<dbReference type="GeneID" id="828520"/>
<dbReference type="Gramene" id="AT4G24190.1">
    <molecule id="Q9STX5-1"/>
    <property type="protein sequence ID" value="AT4G24190.1"/>
    <property type="gene ID" value="AT4G24190"/>
</dbReference>
<dbReference type="KEGG" id="ath:AT4G24190"/>
<dbReference type="Araport" id="AT4G24190"/>
<dbReference type="TAIR" id="AT4G24190">
    <property type="gene designation" value="SHD"/>
</dbReference>
<dbReference type="eggNOG" id="KOG0020">
    <property type="taxonomic scope" value="Eukaryota"/>
</dbReference>
<dbReference type="HOGENOM" id="CLU_006684_1_1_1"/>
<dbReference type="InParanoid" id="Q9STX5"/>
<dbReference type="OMA" id="YMLQETS"/>
<dbReference type="PhylomeDB" id="Q9STX5"/>
<dbReference type="SABIO-RK" id="Q9STX5"/>
<dbReference type="PRO" id="PR:Q9STX5"/>
<dbReference type="Proteomes" id="UP000006548">
    <property type="component" value="Chromosome 4"/>
</dbReference>
<dbReference type="ExpressionAtlas" id="Q9STX5">
    <property type="expression patterns" value="baseline and differential"/>
</dbReference>
<dbReference type="GO" id="GO:0009507">
    <property type="term" value="C:chloroplast"/>
    <property type="evidence" value="ECO:0007005"/>
    <property type="project" value="TAIR"/>
</dbReference>
<dbReference type="GO" id="GO:0005829">
    <property type="term" value="C:cytosol"/>
    <property type="evidence" value="ECO:0007005"/>
    <property type="project" value="TAIR"/>
</dbReference>
<dbReference type="GO" id="GO:0005783">
    <property type="term" value="C:endoplasmic reticulum"/>
    <property type="evidence" value="ECO:0000314"/>
    <property type="project" value="TAIR"/>
</dbReference>
<dbReference type="GO" id="GO:0005788">
    <property type="term" value="C:endoplasmic reticulum lumen"/>
    <property type="evidence" value="ECO:0007669"/>
    <property type="project" value="UniProtKB-SubCell"/>
</dbReference>
<dbReference type="GO" id="GO:0005739">
    <property type="term" value="C:mitochondrion"/>
    <property type="evidence" value="ECO:0007005"/>
    <property type="project" value="TAIR"/>
</dbReference>
<dbReference type="GO" id="GO:0005634">
    <property type="term" value="C:nucleus"/>
    <property type="evidence" value="ECO:0007005"/>
    <property type="project" value="TAIR"/>
</dbReference>
<dbReference type="GO" id="GO:0000325">
    <property type="term" value="C:plant-type vacuole"/>
    <property type="evidence" value="ECO:0007005"/>
    <property type="project" value="TAIR"/>
</dbReference>
<dbReference type="GO" id="GO:0005886">
    <property type="term" value="C:plasma membrane"/>
    <property type="evidence" value="ECO:0007005"/>
    <property type="project" value="TAIR"/>
</dbReference>
<dbReference type="GO" id="GO:0009506">
    <property type="term" value="C:plasmodesma"/>
    <property type="evidence" value="ECO:0007005"/>
    <property type="project" value="TAIR"/>
</dbReference>
<dbReference type="GO" id="GO:0099503">
    <property type="term" value="C:secretory vesicle"/>
    <property type="evidence" value="ECO:0007005"/>
    <property type="project" value="TAIR"/>
</dbReference>
<dbReference type="GO" id="GO:0005524">
    <property type="term" value="F:ATP binding"/>
    <property type="evidence" value="ECO:0007669"/>
    <property type="project" value="UniProtKB-KW"/>
</dbReference>
<dbReference type="GO" id="GO:0016887">
    <property type="term" value="F:ATP hydrolysis activity"/>
    <property type="evidence" value="ECO:0000314"/>
    <property type="project" value="UniProtKB"/>
</dbReference>
<dbReference type="GO" id="GO:0140662">
    <property type="term" value="F:ATP-dependent protein folding chaperone"/>
    <property type="evidence" value="ECO:0007669"/>
    <property type="project" value="InterPro"/>
</dbReference>
<dbReference type="GO" id="GO:0051082">
    <property type="term" value="F:unfolded protein binding"/>
    <property type="evidence" value="ECO:0007669"/>
    <property type="project" value="InterPro"/>
</dbReference>
<dbReference type="GO" id="GO:0009306">
    <property type="term" value="P:protein secretion"/>
    <property type="evidence" value="ECO:0000314"/>
    <property type="project" value="TAIR"/>
</dbReference>
<dbReference type="GO" id="GO:0010075">
    <property type="term" value="P:regulation of meristem growth"/>
    <property type="evidence" value="ECO:0000315"/>
    <property type="project" value="TAIR"/>
</dbReference>
<dbReference type="GO" id="GO:0009934">
    <property type="term" value="P:regulation of meristem structural organization"/>
    <property type="evidence" value="ECO:0000315"/>
    <property type="project" value="TAIR"/>
</dbReference>
<dbReference type="GO" id="GO:0034976">
    <property type="term" value="P:response to endoplasmic reticulum stress"/>
    <property type="evidence" value="ECO:0000315"/>
    <property type="project" value="UniProtKB"/>
</dbReference>
<dbReference type="GO" id="GO:0009651">
    <property type="term" value="P:response to salt stress"/>
    <property type="evidence" value="ECO:0000315"/>
    <property type="project" value="TAIR"/>
</dbReference>
<dbReference type="GO" id="GO:0009414">
    <property type="term" value="P:response to water deprivation"/>
    <property type="evidence" value="ECO:0000315"/>
    <property type="project" value="TAIR"/>
</dbReference>
<dbReference type="CDD" id="cd16927">
    <property type="entry name" value="HATPase_Hsp90-like"/>
    <property type="match status" value="1"/>
</dbReference>
<dbReference type="FunFam" id="3.30.230.80:FF:000006">
    <property type="entry name" value="endoplasmin homolog"/>
    <property type="match status" value="1"/>
</dbReference>
<dbReference type="FunFam" id="3.40.50.11260:FF:000006">
    <property type="entry name" value="endoplasmin homolog"/>
    <property type="match status" value="1"/>
</dbReference>
<dbReference type="FunFam" id="1.20.120.790:FF:000005">
    <property type="entry name" value="Endoplasmin-like isoform B"/>
    <property type="match status" value="1"/>
</dbReference>
<dbReference type="FunFam" id="3.30.565.10:FF:000005">
    <property type="entry name" value="Heat shock protein 90"/>
    <property type="match status" value="1"/>
</dbReference>
<dbReference type="Gene3D" id="3.30.230.80">
    <property type="match status" value="1"/>
</dbReference>
<dbReference type="Gene3D" id="3.40.50.11260">
    <property type="match status" value="1"/>
</dbReference>
<dbReference type="Gene3D" id="1.20.120.790">
    <property type="entry name" value="Heat shock protein 90, C-terminal domain"/>
    <property type="match status" value="1"/>
</dbReference>
<dbReference type="Gene3D" id="3.30.565.10">
    <property type="entry name" value="Histidine kinase-like ATPase, C-terminal domain"/>
    <property type="match status" value="1"/>
</dbReference>
<dbReference type="HAMAP" id="MF_00505">
    <property type="entry name" value="HSP90"/>
    <property type="match status" value="1"/>
</dbReference>
<dbReference type="InterPro" id="IPR036890">
    <property type="entry name" value="HATPase_C_sf"/>
</dbReference>
<dbReference type="InterPro" id="IPR019805">
    <property type="entry name" value="Heat_shock_protein_90_CS"/>
</dbReference>
<dbReference type="InterPro" id="IPR037196">
    <property type="entry name" value="HSP90_C"/>
</dbReference>
<dbReference type="InterPro" id="IPR001404">
    <property type="entry name" value="Hsp90_fam"/>
</dbReference>
<dbReference type="InterPro" id="IPR020575">
    <property type="entry name" value="Hsp90_N"/>
</dbReference>
<dbReference type="InterPro" id="IPR020568">
    <property type="entry name" value="Ribosomal_Su5_D2-typ_SF"/>
</dbReference>
<dbReference type="NCBIfam" id="NF003555">
    <property type="entry name" value="PRK05218.1"/>
    <property type="match status" value="1"/>
</dbReference>
<dbReference type="PANTHER" id="PTHR11528">
    <property type="entry name" value="HEAT SHOCK PROTEIN 90 FAMILY MEMBER"/>
    <property type="match status" value="1"/>
</dbReference>
<dbReference type="Pfam" id="PF13589">
    <property type="entry name" value="HATPase_c_3"/>
    <property type="match status" value="1"/>
</dbReference>
<dbReference type="Pfam" id="PF00183">
    <property type="entry name" value="HSP90"/>
    <property type="match status" value="1"/>
</dbReference>
<dbReference type="PIRSF" id="PIRSF002583">
    <property type="entry name" value="Hsp90"/>
    <property type="match status" value="1"/>
</dbReference>
<dbReference type="PRINTS" id="PR00775">
    <property type="entry name" value="HEATSHOCK90"/>
</dbReference>
<dbReference type="SMART" id="SM00387">
    <property type="entry name" value="HATPase_c"/>
    <property type="match status" value="1"/>
</dbReference>
<dbReference type="SUPFAM" id="SSF55874">
    <property type="entry name" value="ATPase domain of HSP90 chaperone/DNA topoisomerase II/histidine kinase"/>
    <property type="match status" value="1"/>
</dbReference>
<dbReference type="SUPFAM" id="SSF110942">
    <property type="entry name" value="HSP90 C-terminal domain"/>
    <property type="match status" value="1"/>
</dbReference>
<dbReference type="SUPFAM" id="SSF54211">
    <property type="entry name" value="Ribosomal protein S5 domain 2-like"/>
    <property type="match status" value="1"/>
</dbReference>
<dbReference type="PROSITE" id="PS00014">
    <property type="entry name" value="ER_TARGET"/>
    <property type="match status" value="1"/>
</dbReference>
<dbReference type="PROSITE" id="PS00298">
    <property type="entry name" value="HSP90"/>
    <property type="match status" value="1"/>
</dbReference>
<gene>
    <name evidence="10" type="primary">HSP90-7</name>
    <name evidence="11" type="synonym">SHD</name>
    <name type="ordered locus">At4g24190</name>
    <name type="ORF">T19F6.1</name>
    <name type="ORF">T22A6.20</name>
</gene>
<accession>Q9STX5</accession>
<accession>O22972</accession>
<accession>Q56Y38</accession>
<accession>Q8VY71</accession>
<proteinExistence type="evidence at protein level"/>
<feature type="signal peptide" evidence="4">
    <location>
        <begin position="1"/>
        <end position="23"/>
    </location>
</feature>
<feature type="chain" id="PRO_0000226071" description="Endoplasmin homolog">
    <location>
        <begin position="24"/>
        <end position="823"/>
    </location>
</feature>
<feature type="region of interest" description="Disordered" evidence="5">
    <location>
        <begin position="29"/>
        <end position="60"/>
    </location>
</feature>
<feature type="region of interest" description="Disordered" evidence="5">
    <location>
        <begin position="289"/>
        <end position="328"/>
    </location>
</feature>
<feature type="region of interest" description="Disordered" evidence="5">
    <location>
        <begin position="777"/>
        <end position="823"/>
    </location>
</feature>
<feature type="short sequence motif" description="Prevents secretion from ER" evidence="1">
    <location>
        <begin position="820"/>
        <end position="823"/>
    </location>
</feature>
<feature type="compositionally biased region" description="Basic and acidic residues" evidence="5">
    <location>
        <begin position="39"/>
        <end position="48"/>
    </location>
</feature>
<feature type="compositionally biased region" description="Acidic residues" evidence="5">
    <location>
        <begin position="290"/>
        <end position="321"/>
    </location>
</feature>
<feature type="compositionally biased region" description="Acidic residues" evidence="5">
    <location>
        <begin position="777"/>
        <end position="792"/>
    </location>
</feature>
<feature type="binding site" evidence="2">
    <location>
        <position position="106"/>
    </location>
    <ligand>
        <name>ATP</name>
        <dbReference type="ChEBI" id="CHEBI:30616"/>
    </ligand>
</feature>
<feature type="binding site" evidence="2">
    <location>
        <position position="110"/>
    </location>
    <ligand>
        <name>ATP</name>
        <dbReference type="ChEBI" id="CHEBI:30616"/>
    </ligand>
</feature>
<feature type="binding site" evidence="2">
    <location>
        <position position="154"/>
    </location>
    <ligand>
        <name>ATP</name>
        <dbReference type="ChEBI" id="CHEBI:30616"/>
    </ligand>
</feature>
<feature type="binding site" evidence="2">
    <location>
        <position position="159"/>
    </location>
    <ligand>
        <name>ATP</name>
        <dbReference type="ChEBI" id="CHEBI:30616"/>
    </ligand>
</feature>
<feature type="binding site" evidence="2">
    <location>
        <position position="167"/>
    </location>
    <ligand>
        <name>ATP</name>
        <dbReference type="ChEBI" id="CHEBI:30616"/>
    </ligand>
</feature>
<feature type="binding site" evidence="2">
    <location>
        <position position="173"/>
    </location>
    <ligand>
        <name>ATP</name>
        <dbReference type="ChEBI" id="CHEBI:30616"/>
    </ligand>
</feature>
<feature type="binding site" evidence="2">
    <location>
        <begin position="174"/>
        <end position="175"/>
    </location>
    <ligand>
        <name>ATP</name>
        <dbReference type="ChEBI" id="CHEBI:30616"/>
    </ligand>
</feature>
<feature type="binding site" evidence="2">
    <location>
        <begin position="194"/>
        <end position="199"/>
    </location>
    <ligand>
        <name>ATP</name>
        <dbReference type="ChEBI" id="CHEBI:30616"/>
    </ligand>
</feature>
<feature type="binding site" evidence="3">
    <location>
        <position position="199"/>
    </location>
    <ligand>
        <name>ATP</name>
        <dbReference type="ChEBI" id="CHEBI:30616"/>
    </ligand>
</feature>
<feature type="binding site" evidence="2">
    <location>
        <position position="246"/>
    </location>
    <ligand>
        <name>ATP</name>
        <dbReference type="ChEBI" id="CHEBI:30616"/>
    </ligand>
</feature>
<feature type="site" description="Important for ATP hydrolysis" evidence="3">
    <location>
        <position position="455"/>
    </location>
</feature>
<feature type="glycosylation site" description="N-linked (GlcNAc...) asparagine" evidence="4">
    <location>
        <position position="110"/>
    </location>
</feature>
<feature type="glycosylation site" description="N-linked (GlcNAc...) asparagine" evidence="4">
    <location>
        <position position="452"/>
    </location>
</feature>
<feature type="glycosylation site" description="N-linked (GlcNAc...) asparagine" evidence="4">
    <location>
        <position position="620"/>
    </location>
</feature>
<reference key="1">
    <citation type="journal article" date="2002" name="EMBO J.">
        <title>SHEPHERD is the Arabidopsis GRP94 responsible for the formation of functional CLAVATA proteins.</title>
        <authorList>
            <person name="Ishiguro S."/>
            <person name="Watanabe Y."/>
            <person name="Ito N."/>
            <person name="Nonaka H."/>
            <person name="Takeda N."/>
            <person name="Sakai T."/>
            <person name="Kanaya H."/>
            <person name="Okada K."/>
        </authorList>
    </citation>
    <scope>NUCLEOTIDE SEQUENCE [MRNA]</scope>
    <scope>FUNCTION</scope>
    <scope>TISSUE SPECIFICITY</scope>
    <scope>INDUCTION</scope>
    <source>
        <strain>cv. Columbia</strain>
    </source>
</reference>
<reference key="2">
    <citation type="journal article" date="1999" name="Nature">
        <title>Sequence and analysis of chromosome 4 of the plant Arabidopsis thaliana.</title>
        <authorList>
            <person name="Mayer K.F.X."/>
            <person name="Schueller C."/>
            <person name="Wambutt R."/>
            <person name="Murphy G."/>
            <person name="Volckaert G."/>
            <person name="Pohl T."/>
            <person name="Duesterhoeft A."/>
            <person name="Stiekema W."/>
            <person name="Entian K.-D."/>
            <person name="Terryn N."/>
            <person name="Harris B."/>
            <person name="Ansorge W."/>
            <person name="Brandt P."/>
            <person name="Grivell L.A."/>
            <person name="Rieger M."/>
            <person name="Weichselgartner M."/>
            <person name="de Simone V."/>
            <person name="Obermaier B."/>
            <person name="Mache R."/>
            <person name="Mueller M."/>
            <person name="Kreis M."/>
            <person name="Delseny M."/>
            <person name="Puigdomenech P."/>
            <person name="Watson M."/>
            <person name="Schmidtheini T."/>
            <person name="Reichert B."/>
            <person name="Portetelle D."/>
            <person name="Perez-Alonso M."/>
            <person name="Boutry M."/>
            <person name="Bancroft I."/>
            <person name="Vos P."/>
            <person name="Hoheisel J."/>
            <person name="Zimmermann W."/>
            <person name="Wedler H."/>
            <person name="Ridley P."/>
            <person name="Langham S.-A."/>
            <person name="McCullagh B."/>
            <person name="Bilham L."/>
            <person name="Robben J."/>
            <person name="van der Schueren J."/>
            <person name="Grymonprez B."/>
            <person name="Chuang Y.-J."/>
            <person name="Vandenbussche F."/>
            <person name="Braeken M."/>
            <person name="Weltjens I."/>
            <person name="Voet M."/>
            <person name="Bastiaens I."/>
            <person name="Aert R."/>
            <person name="Defoor E."/>
            <person name="Weitzenegger T."/>
            <person name="Bothe G."/>
            <person name="Ramsperger U."/>
            <person name="Hilbert H."/>
            <person name="Braun M."/>
            <person name="Holzer E."/>
            <person name="Brandt A."/>
            <person name="Peters S."/>
            <person name="van Staveren M."/>
            <person name="Dirkse W."/>
            <person name="Mooijman P."/>
            <person name="Klein Lankhorst R."/>
            <person name="Rose M."/>
            <person name="Hauf J."/>
            <person name="Koetter P."/>
            <person name="Berneiser S."/>
            <person name="Hempel S."/>
            <person name="Feldpausch M."/>
            <person name="Lamberth S."/>
            <person name="Van den Daele H."/>
            <person name="De Keyser A."/>
            <person name="Buysshaert C."/>
            <person name="Gielen J."/>
            <person name="Villarroel R."/>
            <person name="De Clercq R."/>
            <person name="van Montagu M."/>
            <person name="Rogers J."/>
            <person name="Cronin A."/>
            <person name="Quail M.A."/>
            <person name="Bray-Allen S."/>
            <person name="Clark L."/>
            <person name="Doggett J."/>
            <person name="Hall S."/>
            <person name="Kay M."/>
            <person name="Lennard N."/>
            <person name="McLay K."/>
            <person name="Mayes R."/>
            <person name="Pettett A."/>
            <person name="Rajandream M.A."/>
            <person name="Lyne M."/>
            <person name="Benes V."/>
            <person name="Rechmann S."/>
            <person name="Borkova D."/>
            <person name="Bloecker H."/>
            <person name="Scharfe M."/>
            <person name="Grimm M."/>
            <person name="Loehnert T.-H."/>
            <person name="Dose S."/>
            <person name="de Haan M."/>
            <person name="Maarse A.C."/>
            <person name="Schaefer M."/>
            <person name="Mueller-Auer S."/>
            <person name="Gabel C."/>
            <person name="Fuchs M."/>
            <person name="Fartmann B."/>
            <person name="Granderath K."/>
            <person name="Dauner D."/>
            <person name="Herzl A."/>
            <person name="Neumann S."/>
            <person name="Argiriou A."/>
            <person name="Vitale D."/>
            <person name="Liguori R."/>
            <person name="Piravandi E."/>
            <person name="Massenet O."/>
            <person name="Quigley F."/>
            <person name="Clabauld G."/>
            <person name="Muendlein A."/>
            <person name="Felber R."/>
            <person name="Schnabl S."/>
            <person name="Hiller R."/>
            <person name="Schmidt W."/>
            <person name="Lecharny A."/>
            <person name="Aubourg S."/>
            <person name="Chefdor F."/>
            <person name="Cooke R."/>
            <person name="Berger C."/>
            <person name="Monfort A."/>
            <person name="Casacuberta E."/>
            <person name="Gibbons T."/>
            <person name="Weber N."/>
            <person name="Vandenbol M."/>
            <person name="Bargues M."/>
            <person name="Terol J."/>
            <person name="Torres A."/>
            <person name="Perez-Perez A."/>
            <person name="Purnelle B."/>
            <person name="Bent E."/>
            <person name="Johnson S."/>
            <person name="Tacon D."/>
            <person name="Jesse T."/>
            <person name="Heijnen L."/>
            <person name="Schwarz S."/>
            <person name="Scholler P."/>
            <person name="Heber S."/>
            <person name="Francs P."/>
            <person name="Bielke C."/>
            <person name="Frishman D."/>
            <person name="Haase D."/>
            <person name="Lemcke K."/>
            <person name="Mewes H.-W."/>
            <person name="Stocker S."/>
            <person name="Zaccaria P."/>
            <person name="Bevan M."/>
            <person name="Wilson R.K."/>
            <person name="de la Bastide M."/>
            <person name="Habermann K."/>
            <person name="Parnell L."/>
            <person name="Dedhia N."/>
            <person name="Gnoj L."/>
            <person name="Schutz K."/>
            <person name="Huang E."/>
            <person name="Spiegel L."/>
            <person name="Sekhon M."/>
            <person name="Murray J."/>
            <person name="Sheet P."/>
            <person name="Cordes M."/>
            <person name="Abu-Threideh J."/>
            <person name="Stoneking T."/>
            <person name="Kalicki J."/>
            <person name="Graves T."/>
            <person name="Harmon G."/>
            <person name="Edwards J."/>
            <person name="Latreille P."/>
            <person name="Courtney L."/>
            <person name="Cloud J."/>
            <person name="Abbott A."/>
            <person name="Scott K."/>
            <person name="Johnson D."/>
            <person name="Minx P."/>
            <person name="Bentley D."/>
            <person name="Fulton B."/>
            <person name="Miller N."/>
            <person name="Greco T."/>
            <person name="Kemp K."/>
            <person name="Kramer J."/>
            <person name="Fulton L."/>
            <person name="Mardis E."/>
            <person name="Dante M."/>
            <person name="Pepin K."/>
            <person name="Hillier L.W."/>
            <person name="Nelson J."/>
            <person name="Spieth J."/>
            <person name="Ryan E."/>
            <person name="Andrews S."/>
            <person name="Geisel C."/>
            <person name="Layman D."/>
            <person name="Du H."/>
            <person name="Ali J."/>
            <person name="Berghoff A."/>
            <person name="Jones K."/>
            <person name="Drone K."/>
            <person name="Cotton M."/>
            <person name="Joshu C."/>
            <person name="Antonoiu B."/>
            <person name="Zidanic M."/>
            <person name="Strong C."/>
            <person name="Sun H."/>
            <person name="Lamar B."/>
            <person name="Yordan C."/>
            <person name="Ma P."/>
            <person name="Zhong J."/>
            <person name="Preston R."/>
            <person name="Vil D."/>
            <person name="Shekher M."/>
            <person name="Matero A."/>
            <person name="Shah R."/>
            <person name="Swaby I.K."/>
            <person name="O'Shaughnessy A."/>
            <person name="Rodriguez M."/>
            <person name="Hoffman J."/>
            <person name="Till S."/>
            <person name="Granat S."/>
            <person name="Shohdy N."/>
            <person name="Hasegawa A."/>
            <person name="Hameed A."/>
            <person name="Lodhi M."/>
            <person name="Johnson A."/>
            <person name="Chen E."/>
            <person name="Marra M.A."/>
            <person name="Martienssen R."/>
            <person name="McCombie W.R."/>
        </authorList>
    </citation>
    <scope>NUCLEOTIDE SEQUENCE [LARGE SCALE GENOMIC DNA]</scope>
    <source>
        <strain>cv. Columbia</strain>
    </source>
</reference>
<reference key="3">
    <citation type="journal article" date="2017" name="Plant J.">
        <title>Araport11: a complete reannotation of the Arabidopsis thaliana reference genome.</title>
        <authorList>
            <person name="Cheng C.Y."/>
            <person name="Krishnakumar V."/>
            <person name="Chan A.P."/>
            <person name="Thibaud-Nissen F."/>
            <person name="Schobel S."/>
            <person name="Town C.D."/>
        </authorList>
    </citation>
    <scope>GENOME REANNOTATION</scope>
    <source>
        <strain>cv. Columbia</strain>
    </source>
</reference>
<reference key="4">
    <citation type="journal article" date="2003" name="Science">
        <title>Empirical analysis of transcriptional activity in the Arabidopsis genome.</title>
        <authorList>
            <person name="Yamada K."/>
            <person name="Lim J."/>
            <person name="Dale J.M."/>
            <person name="Chen H."/>
            <person name="Shinn P."/>
            <person name="Palm C.J."/>
            <person name="Southwick A.M."/>
            <person name="Wu H.C."/>
            <person name="Kim C.J."/>
            <person name="Nguyen M."/>
            <person name="Pham P.K."/>
            <person name="Cheuk R.F."/>
            <person name="Karlin-Newmann G."/>
            <person name="Liu S.X."/>
            <person name="Lam B."/>
            <person name="Sakano H."/>
            <person name="Wu T."/>
            <person name="Yu G."/>
            <person name="Miranda M."/>
            <person name="Quach H.L."/>
            <person name="Tripp M."/>
            <person name="Chang C.H."/>
            <person name="Lee J.M."/>
            <person name="Toriumi M.J."/>
            <person name="Chan M.M."/>
            <person name="Tang C.C."/>
            <person name="Onodera C.S."/>
            <person name="Deng J.M."/>
            <person name="Akiyama K."/>
            <person name="Ansari Y."/>
            <person name="Arakawa T."/>
            <person name="Banh J."/>
            <person name="Banno F."/>
            <person name="Bowser L."/>
            <person name="Brooks S.Y."/>
            <person name="Carninci P."/>
            <person name="Chao Q."/>
            <person name="Choy N."/>
            <person name="Enju A."/>
            <person name="Goldsmith A.D."/>
            <person name="Gurjal M."/>
            <person name="Hansen N.F."/>
            <person name="Hayashizaki Y."/>
            <person name="Johnson-Hopson C."/>
            <person name="Hsuan V.W."/>
            <person name="Iida K."/>
            <person name="Karnes M."/>
            <person name="Khan S."/>
            <person name="Koesema E."/>
            <person name="Ishida J."/>
            <person name="Jiang P.X."/>
            <person name="Jones T."/>
            <person name="Kawai J."/>
            <person name="Kamiya A."/>
            <person name="Meyers C."/>
            <person name="Nakajima M."/>
            <person name="Narusaka M."/>
            <person name="Seki M."/>
            <person name="Sakurai T."/>
            <person name="Satou M."/>
            <person name="Tamse R."/>
            <person name="Vaysberg M."/>
            <person name="Wallender E.K."/>
            <person name="Wong C."/>
            <person name="Yamamura Y."/>
            <person name="Yuan S."/>
            <person name="Shinozaki K."/>
            <person name="Davis R.W."/>
            <person name="Theologis A."/>
            <person name="Ecker J.R."/>
        </authorList>
    </citation>
    <scope>NUCLEOTIDE SEQUENCE [LARGE SCALE MRNA]</scope>
    <source>
        <strain>cv. Columbia</strain>
    </source>
</reference>
<reference key="5">
    <citation type="submission" date="2005-03" db="EMBL/GenBank/DDBJ databases">
        <title>Large-scale analysis of RIKEN Arabidopsis full-length (RAFL) cDNAs.</title>
        <authorList>
            <person name="Totoki Y."/>
            <person name="Seki M."/>
            <person name="Ishida J."/>
            <person name="Nakajima M."/>
            <person name="Enju A."/>
            <person name="Kamiya A."/>
            <person name="Narusaka M."/>
            <person name="Shin-i T."/>
            <person name="Nakagawa M."/>
            <person name="Sakamoto N."/>
            <person name="Oishi K."/>
            <person name="Kohara Y."/>
            <person name="Kobayashi M."/>
            <person name="Toyoda A."/>
            <person name="Sakaki Y."/>
            <person name="Sakurai T."/>
            <person name="Iida K."/>
            <person name="Akiyama K."/>
            <person name="Satou M."/>
            <person name="Toyoda T."/>
            <person name="Konagaya A."/>
            <person name="Carninci P."/>
            <person name="Kawai J."/>
            <person name="Hayashizaki Y."/>
            <person name="Shinozaki K."/>
        </authorList>
    </citation>
    <scope>NUCLEOTIDE SEQUENCE [LARGE SCALE MRNA] OF 1-238</scope>
    <source>
        <strain>cv. Columbia</strain>
    </source>
</reference>
<reference key="6">
    <citation type="journal article" date="2001" name="Cell Stress Chaperones">
        <title>The Hsp90 family of proteins in Arabidopsis thaliana.</title>
        <authorList>
            <person name="Krishna P."/>
            <person name="Gloor G."/>
        </authorList>
    </citation>
    <scope>GENE FAMILY</scope>
    <scope>NOMENCLATURE</scope>
</reference>
<reference key="7">
    <citation type="journal article" date="2002" name="Plant J.">
        <title>Characterization of Arabidopsis thaliana AtFKBP42 that is membrane-bound and interacts with Hsp90.</title>
        <authorList>
            <person name="Kamphausen T."/>
            <person name="Fanghaenel J."/>
            <person name="Neumann D."/>
            <person name="Schulz B."/>
            <person name="Rahfeld J.-U."/>
        </authorList>
    </citation>
    <scope>INTERACTION WITH FKBP42</scope>
</reference>
<reference key="8">
    <citation type="journal article" date="2007" name="Mol. Cell. Proteomics">
        <title>Multidimensional protein identification technology (MudPIT) analysis of ubiquitinated proteins in plants.</title>
        <authorList>
            <person name="Maor R."/>
            <person name="Jones A."/>
            <person name="Nuehse T.S."/>
            <person name="Studholme D.J."/>
            <person name="Peck S.C."/>
            <person name="Shirasu K."/>
        </authorList>
    </citation>
    <scope>IDENTIFICATION BY MASS SPECTROMETRY [LARGE SCALE ANALYSIS]</scope>
    <source>
        <strain>cv. Landsberg erecta</strain>
    </source>
</reference>
<reference key="9">
    <citation type="journal article" date="2010" name="J. Plant Physiol.">
        <title>Expression of five AtHsp90 genes in Saccharomyces cerevisiae reveals functional differences of AtHsp90s under abiotic stresses.</title>
        <authorList>
            <person name="Song H."/>
            <person name="Fan P."/>
            <person name="Shi W."/>
            <person name="Zhao R."/>
            <person name="Li Y."/>
        </authorList>
    </citation>
    <scope>INTERACTION WITH P23-1</scope>
</reference>
<reference key="10">
    <citation type="journal article" date="2015" name="J. Exp. Bot.">
        <title>A highly charged region in the middle domain of plant endoplasmic reticulum (ER)-localized heat-shock protein 90 is required for resistance to tunicamycin or high calcium-induced ER stresses.</title>
        <authorList>
            <person name="Chong L.P."/>
            <person name="Wang Y."/>
            <person name="Gad N."/>
            <person name="Anderson N."/>
            <person name="Shah B."/>
            <person name="Zhao R."/>
        </authorList>
    </citation>
    <scope>FUNCTION</scope>
    <scope>CATALYTIC ACTIVITY</scope>
</reference>
<evidence type="ECO:0000250" key="1"/>
<evidence type="ECO:0000250" key="2">
    <source>
        <dbReference type="UniProtKB" id="P02829"/>
    </source>
</evidence>
<evidence type="ECO:0000250" key="3">
    <source>
        <dbReference type="UniProtKB" id="P41148"/>
    </source>
</evidence>
<evidence type="ECO:0000255" key="4"/>
<evidence type="ECO:0000256" key="5">
    <source>
        <dbReference type="SAM" id="MobiDB-lite"/>
    </source>
</evidence>
<evidence type="ECO:0000269" key="6">
    <source>
    </source>
</evidence>
<evidence type="ECO:0000269" key="7">
    <source>
    </source>
</evidence>
<evidence type="ECO:0000269" key="8">
    <source>
    </source>
</evidence>
<evidence type="ECO:0000269" key="9">
    <source>
    </source>
</evidence>
<evidence type="ECO:0000303" key="10">
    <source>
    </source>
</evidence>
<evidence type="ECO:0000303" key="11">
    <source>
    </source>
</evidence>
<evidence type="ECO:0000305" key="12"/>
<protein>
    <recommendedName>
        <fullName evidence="12">Endoplasmin homolog</fullName>
    </recommendedName>
    <alternativeName>
        <fullName evidence="11">Glucose-regulated protein 94 homolog</fullName>
        <shortName evidence="11">GRP-94 homolog</shortName>
    </alternativeName>
    <alternativeName>
        <fullName evidence="12">Heat shock protein 90-7</fullName>
        <shortName evidence="12">AtHSP90.7</shortName>
        <shortName evidence="10">AtHsp90-7</shortName>
    </alternativeName>
    <alternativeName>
        <fullName evidence="11">Protein SHEPHERD</fullName>
    </alternativeName>
</protein>
<sequence>MRKRTLVSVLFLFSLLFLLPDQGRKLHANAEESSDDVTDPPKVEEKIGGHGGLSTDSDVVHRESESMSKKTLRSNAEKFEFQAEVSRLMDIIINSLYSNKDIFLRELISNASDALDKIRFLALTDKDVLGEGDTAKLEIQIKLDKAKKILSIRDRGIGMTKEDLIKNLGTIAKSGTSAFVEKMQSSGDLNLIGQFGVGFYSAYLVADYIEVISKHNDDSQYVWESKANGKFAVSEDTWNEPLGRGTEIRLHLRDEAGEYLEESKLKELVKRYSEFINFPISLWASKEVETEVPVEEDESADEETETTSTEEEKEEDAEEEDGEKKQKTKKVKETVYEWELLNDVKAIWLRSPKEVTEEEYTKFYHSLSKDFTDEKPMAWSHFNAEGDVEFKAVLYVPPKAPHDLYESYYNSNKANLKLYVRRVFISDEFDELLPKYLSFLKGLVDSDTLPLNVSREMLQQHSSLKTIKKKLIRKALDMIRKLAEEDPDEIHDDEKKDVEKSGENDEKKGQYTKFWNEFGKSVKLGIIEDAANRNRLAKLLRFETTKSDGKLTSLDQYIKRMKKSQKDIFYITGSSKEQLEKSPFLERLIKKGYEVIFFTDPVDEYLMQYLMDYEDKKFQNVSKEGLKVGKDSKDKELKEAFKELTKWWKGNLASENVDDVKISNRLADTPCVVVTSKFGWSANMERIMQSQTLSDANKQAYMRGKRVLEINPRHPIIKELKDRIASDPEDESVKETAQLMYQTALIESGFILTDPKDFAARIYNSVKSGLNISPDAVADEEIEAAEEPETSEATETKSDDLAGGLNIEAEPVEQQEENTKDEL</sequence>
<keyword id="KW-0025">Alternative splicing</keyword>
<keyword id="KW-0067">ATP-binding</keyword>
<keyword id="KW-0106">Calcium</keyword>
<keyword id="KW-0143">Chaperone</keyword>
<keyword id="KW-0256">Endoplasmic reticulum</keyword>
<keyword id="KW-0325">Glycoprotein</keyword>
<keyword id="KW-0547">Nucleotide-binding</keyword>
<keyword id="KW-1185">Reference proteome</keyword>
<keyword id="KW-0732">Signal</keyword>
<keyword id="KW-0346">Stress response</keyword>
<name>ENPL_ARATH</name>
<organism>
    <name type="scientific">Arabidopsis thaliana</name>
    <name type="common">Mouse-ear cress</name>
    <dbReference type="NCBI Taxonomy" id="3702"/>
    <lineage>
        <taxon>Eukaryota</taxon>
        <taxon>Viridiplantae</taxon>
        <taxon>Streptophyta</taxon>
        <taxon>Embryophyta</taxon>
        <taxon>Tracheophyta</taxon>
        <taxon>Spermatophyta</taxon>
        <taxon>Magnoliopsida</taxon>
        <taxon>eudicotyledons</taxon>
        <taxon>Gunneridae</taxon>
        <taxon>Pentapetalae</taxon>
        <taxon>rosids</taxon>
        <taxon>malvids</taxon>
        <taxon>Brassicales</taxon>
        <taxon>Brassicaceae</taxon>
        <taxon>Camelineae</taxon>
        <taxon>Arabidopsis</taxon>
    </lineage>
</organism>
<comment type="function">
    <text evidence="6 9">May have a molecular chaperone role in the processing of secreted materials. Required for shoot apical meristem (SAM), root apical meristem (RAM) and floral meristem (FM) formation, probably by regulating the folding of CLAVATA proteins (CLVs). Also involved in pollen tube elongation (PubMed:11867518). Involved in resistance to tunicamycin- or high calcium-induced ER stresses. Possesses ATPase activity (PubMed:25297550).</text>
</comment>
<comment type="biophysicochemical properties">
    <kinetics>
        <KM evidence="9">0.77 mM for ATP</KM>
    </kinetics>
</comment>
<comment type="subunit">
    <text evidence="7 8">Interacts with FKBP42 (PubMed:12410806). Interacts with P23-1 (PubMed:20493581).</text>
</comment>
<comment type="subcellular location">
    <subcellularLocation>
        <location evidence="1">Endoplasmic reticulum lumen</location>
    </subcellularLocation>
</comment>
<comment type="alternative products">
    <event type="alternative splicing"/>
    <isoform>
        <id>Q9STX5-1</id>
        <name>1</name>
        <sequence type="displayed"/>
    </isoform>
    <text>A number of isoforms are produced. According to EST sequences.</text>
</comment>
<comment type="tissue specificity">
    <text evidence="6">Ubiquitous.</text>
</comment>
<comment type="induction">
    <text evidence="6">Seems inhibited by heat shock.</text>
</comment>
<comment type="similarity">
    <text evidence="12">Belongs to the heat shock protein 90 family.</text>
</comment>
<comment type="sequence caution" evidence="12">
    <conflict type="erroneous gene model prediction">
        <sequence resource="EMBL-CDS" id="AAB63606"/>
    </conflict>
</comment>